<reference key="1">
    <citation type="journal article" date="1991" name="Gen. Comp. Endocrinol.">
        <title>Isolation and primary structure of glucagon from the endocrine pancreas of Thunnus obesus.</title>
        <authorList>
            <person name="Navarro I."/>
            <person name="Gutierrez J."/>
            <person name="Caixach J."/>
            <person name="Rivera J."/>
            <person name="Planas J."/>
        </authorList>
    </citation>
    <scope>PROTEIN SEQUENCE</scope>
    <source>
        <tissue>Pancreas</tissue>
    </source>
</reference>
<proteinExistence type="evidence at protein level"/>
<protein>
    <recommendedName>
        <fullName>Glucagon</fullName>
    </recommendedName>
</protein>
<evidence type="ECO:0000305" key="1"/>
<feature type="peptide" id="PRO_0000043928" description="Glucagon">
    <location>
        <begin position="1"/>
        <end position="29"/>
    </location>
</feature>
<name>GLUC_THUOB</name>
<dbReference type="PIR" id="A61135">
    <property type="entry name" value="A61135"/>
</dbReference>
<dbReference type="SMR" id="P68957"/>
<dbReference type="GO" id="GO:0005576">
    <property type="term" value="C:extracellular region"/>
    <property type="evidence" value="ECO:0007669"/>
    <property type="project" value="UniProtKB-SubCell"/>
</dbReference>
<dbReference type="GO" id="GO:0031769">
    <property type="term" value="F:glucagon receptor binding"/>
    <property type="evidence" value="ECO:0007669"/>
    <property type="project" value="TreeGrafter"/>
</dbReference>
<dbReference type="GO" id="GO:0005179">
    <property type="term" value="F:hormone activity"/>
    <property type="evidence" value="ECO:0007669"/>
    <property type="project" value="UniProtKB-KW"/>
</dbReference>
<dbReference type="GO" id="GO:0042594">
    <property type="term" value="P:response to starvation"/>
    <property type="evidence" value="ECO:0007669"/>
    <property type="project" value="TreeGrafter"/>
</dbReference>
<dbReference type="Gene3D" id="6.10.250.590">
    <property type="match status" value="1"/>
</dbReference>
<dbReference type="InterPro" id="IPR015550">
    <property type="entry name" value="Glucagon"/>
</dbReference>
<dbReference type="InterPro" id="IPR000532">
    <property type="entry name" value="Glucagon_GIP_secretin_VIP"/>
</dbReference>
<dbReference type="PANTHER" id="PTHR11418">
    <property type="entry name" value="GLUCAGON"/>
    <property type="match status" value="1"/>
</dbReference>
<dbReference type="PANTHER" id="PTHR11418:SF0">
    <property type="entry name" value="PRO-GLUCAGON"/>
    <property type="match status" value="1"/>
</dbReference>
<dbReference type="Pfam" id="PF00123">
    <property type="entry name" value="Hormone_2"/>
    <property type="match status" value="1"/>
</dbReference>
<dbReference type="PRINTS" id="PR00275">
    <property type="entry name" value="GLUCAGON"/>
</dbReference>
<dbReference type="SMART" id="SM00070">
    <property type="entry name" value="GLUCA"/>
    <property type="match status" value="1"/>
</dbReference>
<dbReference type="PROSITE" id="PS00260">
    <property type="entry name" value="GLUCAGON"/>
    <property type="match status" value="1"/>
</dbReference>
<accession>P68957</accession>
<accession>P23062</accession>
<sequence>HSEGTFSNDYSKYLETRRAQDFVQWLKNS</sequence>
<organism>
    <name type="scientific">Thunnus obesus</name>
    <name type="common">Bigeye tuna</name>
    <dbReference type="NCBI Taxonomy" id="8241"/>
    <lineage>
        <taxon>Eukaryota</taxon>
        <taxon>Metazoa</taxon>
        <taxon>Chordata</taxon>
        <taxon>Craniata</taxon>
        <taxon>Vertebrata</taxon>
        <taxon>Euteleostomi</taxon>
        <taxon>Actinopterygii</taxon>
        <taxon>Neopterygii</taxon>
        <taxon>Teleostei</taxon>
        <taxon>Neoteleostei</taxon>
        <taxon>Acanthomorphata</taxon>
        <taxon>Pelagiaria</taxon>
        <taxon>Scombriformes</taxon>
        <taxon>Scombridae</taxon>
        <taxon>Thunnus</taxon>
    </lineage>
</organism>
<comment type="function">
    <text>Promotes hydrolysis of glycogen and lipids, and raises the blood sugar level.</text>
</comment>
<comment type="subcellular location">
    <subcellularLocation>
        <location>Secreted</location>
    </subcellularLocation>
</comment>
<comment type="induction">
    <text>Produced in the A cells of the islets of Langerhans in response to a drop in blood sugar concentration.</text>
</comment>
<comment type="similarity">
    <text evidence="1">Belongs to the glucagon family.</text>
</comment>
<gene>
    <name type="primary">gcg</name>
</gene>
<keyword id="KW-0903">Direct protein sequencing</keyword>
<keyword id="KW-0372">Hormone</keyword>
<keyword id="KW-0964">Secreted</keyword>